<sequence length="441" mass="48244">MNKYQAVIIGFGKAGKTLAVTLAKAGWRVALIEQSNAMYGGTCINIGCIPTKTLVHDAQQHTDFVRAIQRKNEVVNFLRNKNFHNLADMPNIDVIDGQAEFINNHSLRVHRPEGNLEIHGEKIFINTGAQTVVPPIPGITTTPGVYDSTGLLNLKELPGHLGILGGGYIGVEFASMFANFGSKVTILEAASLFLPREDRDIADNIATILRDQGVDIILNAHVERISHHENQVQVHSEHAQLAVDALLIASGRQPATASLHPENAGIAVNERGAIVVDKRLHTTADNIWAMGDVTGGLQFTYISLDDYRIVRDELLGEGKRSTDDRKNVPYSVFMTPPLSRVGMTEEQARESGADIQVVTLPVAAIPRARVMNDTRGVLKAIVDNKTQRMLGASLLCVDSHEMINIVKMVMDAGLPYSILRDQIFTHPSMSESLNDLFSLVK</sequence>
<gene>
    <name type="primary">rclA</name>
    <name type="synonym">ykgC</name>
    <name type="ordered locus">b0304</name>
    <name type="ordered locus">JW5040</name>
</gene>
<comment type="function">
    <text evidence="2">Probably involved in reactive chlorine species (RCS) stress resistance.</text>
</comment>
<comment type="cofactor">
    <cofactor evidence="1">
        <name>FAD</name>
        <dbReference type="ChEBI" id="CHEBI:57692"/>
    </cofactor>
    <text evidence="1">Binds 1 FAD per subunit.</text>
</comment>
<comment type="induction">
    <text evidence="2">Induced by RclR in response to hypochlorous acid (HOCl).</text>
</comment>
<comment type="disruption phenotype">
    <text evidence="2">Mutants are more sensitive to HOCl treatment than wild-type cells.</text>
</comment>
<comment type="miscellaneous">
    <text evidence="1">The active site is a redox-active disulfide bond.</text>
</comment>
<comment type="similarity">
    <text evidence="3">Belongs to the class-I pyridine nucleotide-disulfide oxidoreductase family.</text>
</comment>
<comment type="sequence caution" evidence="3">
    <conflict type="erroneous initiation">
        <sequence resource="EMBL-CDS" id="AAB18031"/>
    </conflict>
    <text>Extended N-terminus.</text>
</comment>
<organism>
    <name type="scientific">Escherichia coli (strain K12)</name>
    <dbReference type="NCBI Taxonomy" id="83333"/>
    <lineage>
        <taxon>Bacteria</taxon>
        <taxon>Pseudomonadati</taxon>
        <taxon>Pseudomonadota</taxon>
        <taxon>Gammaproteobacteria</taxon>
        <taxon>Enterobacterales</taxon>
        <taxon>Enterobacteriaceae</taxon>
        <taxon>Escherichia</taxon>
    </lineage>
</organism>
<evidence type="ECO:0000250" key="1"/>
<evidence type="ECO:0000269" key="2">
    <source>
    </source>
</evidence>
<evidence type="ECO:0000305" key="3"/>
<evidence type="ECO:0007829" key="4">
    <source>
        <dbReference type="PDB" id="6KGY"/>
    </source>
</evidence>
<evidence type="ECO:0007829" key="5">
    <source>
        <dbReference type="PDB" id="6KYY"/>
    </source>
</evidence>
<name>RCLA_ECOLI</name>
<dbReference type="EMBL" id="U73857">
    <property type="protein sequence ID" value="AAB18031.1"/>
    <property type="status" value="ALT_INIT"/>
    <property type="molecule type" value="Genomic_DNA"/>
</dbReference>
<dbReference type="EMBL" id="U00096">
    <property type="protein sequence ID" value="AAC73407.2"/>
    <property type="molecule type" value="Genomic_DNA"/>
</dbReference>
<dbReference type="EMBL" id="AP009048">
    <property type="protein sequence ID" value="BAE76088.1"/>
    <property type="molecule type" value="Genomic_DNA"/>
</dbReference>
<dbReference type="PIR" id="H64756">
    <property type="entry name" value="H64756"/>
</dbReference>
<dbReference type="RefSeq" id="NP_414838.2">
    <property type="nucleotide sequence ID" value="NC_000913.3"/>
</dbReference>
<dbReference type="RefSeq" id="WP_001046307.1">
    <property type="nucleotide sequence ID" value="NZ_SSUW01000013.1"/>
</dbReference>
<dbReference type="PDB" id="6KGY">
    <property type="method" value="X-ray"/>
    <property type="resolution" value="2.90 A"/>
    <property type="chains" value="A/B/C/D=1-441"/>
</dbReference>
<dbReference type="PDB" id="6KOD">
    <property type="method" value="X-ray"/>
    <property type="resolution" value="3.00 A"/>
    <property type="chains" value="A/B/C/D=1-441"/>
</dbReference>
<dbReference type="PDB" id="6KYY">
    <property type="method" value="X-ray"/>
    <property type="resolution" value="2.80 A"/>
    <property type="chains" value="A/B/C/D=1-441"/>
</dbReference>
<dbReference type="PDBsum" id="6KGY"/>
<dbReference type="PDBsum" id="6KOD"/>
<dbReference type="PDBsum" id="6KYY"/>
<dbReference type="SMR" id="P77212"/>
<dbReference type="BioGRID" id="4259800">
    <property type="interactions" value="21"/>
</dbReference>
<dbReference type="DIP" id="DIP-12675N"/>
<dbReference type="FunCoup" id="P77212">
    <property type="interactions" value="189"/>
</dbReference>
<dbReference type="IntAct" id="P77212">
    <property type="interactions" value="2"/>
</dbReference>
<dbReference type="STRING" id="511145.b0304"/>
<dbReference type="jPOST" id="P77212"/>
<dbReference type="PaxDb" id="511145-b0304"/>
<dbReference type="EnsemblBacteria" id="AAC73407">
    <property type="protein sequence ID" value="AAC73407"/>
    <property type="gene ID" value="b0304"/>
</dbReference>
<dbReference type="GeneID" id="946092"/>
<dbReference type="KEGG" id="ecj:JW5040"/>
<dbReference type="KEGG" id="eco:b0304"/>
<dbReference type="KEGG" id="ecoc:C3026_01490"/>
<dbReference type="KEGG" id="ecoc:C3026_24665"/>
<dbReference type="PATRIC" id="fig|511145.12.peg.311"/>
<dbReference type="EchoBASE" id="EB3350"/>
<dbReference type="eggNOG" id="COG1249">
    <property type="taxonomic scope" value="Bacteria"/>
</dbReference>
<dbReference type="HOGENOM" id="CLU_016755_1_2_6"/>
<dbReference type="InParanoid" id="P77212"/>
<dbReference type="OMA" id="WILNSSH"/>
<dbReference type="OrthoDB" id="9800167at2"/>
<dbReference type="PhylomeDB" id="P77212"/>
<dbReference type="BioCyc" id="EcoCyc:G6174-MONOMER"/>
<dbReference type="BioCyc" id="MetaCyc:G6174-MONOMER"/>
<dbReference type="PRO" id="PR:P77212"/>
<dbReference type="Proteomes" id="UP000000625">
    <property type="component" value="Chromosome"/>
</dbReference>
<dbReference type="GO" id="GO:0008823">
    <property type="term" value="F:cupric reductase (NADH) activity"/>
    <property type="evidence" value="ECO:0000314"/>
    <property type="project" value="EcoCyc"/>
</dbReference>
<dbReference type="GO" id="GO:0050660">
    <property type="term" value="F:flavin adenine dinucleotide binding"/>
    <property type="evidence" value="ECO:0000314"/>
    <property type="project" value="EcoCyc"/>
</dbReference>
<dbReference type="GO" id="GO:0003955">
    <property type="term" value="F:NAD(P)H dehydrogenase (quinone) activity"/>
    <property type="evidence" value="ECO:0000318"/>
    <property type="project" value="GO_Central"/>
</dbReference>
<dbReference type="GO" id="GO:0016668">
    <property type="term" value="F:oxidoreductase activity, acting on a sulfur group of donors, NAD(P) as acceptor"/>
    <property type="evidence" value="ECO:0007669"/>
    <property type="project" value="InterPro"/>
</dbReference>
<dbReference type="GO" id="GO:0016651">
    <property type="term" value="F:oxidoreductase activity, acting on NAD(P)H"/>
    <property type="evidence" value="ECO:0000314"/>
    <property type="project" value="EcoCyc"/>
</dbReference>
<dbReference type="GO" id="GO:0042803">
    <property type="term" value="F:protein homodimerization activity"/>
    <property type="evidence" value="ECO:0000314"/>
    <property type="project" value="EcoCyc"/>
</dbReference>
<dbReference type="GO" id="GO:1901530">
    <property type="term" value="P:response to hypochlorite"/>
    <property type="evidence" value="ECO:0000315"/>
    <property type="project" value="EcoCyc"/>
</dbReference>
<dbReference type="FunFam" id="3.30.390.30:FF:000001">
    <property type="entry name" value="Dihydrolipoyl dehydrogenase"/>
    <property type="match status" value="1"/>
</dbReference>
<dbReference type="FunFam" id="3.50.50.60:FF:000128">
    <property type="entry name" value="Pyridine nucleotide-disulfide oxidoreductase YkgC"/>
    <property type="match status" value="1"/>
</dbReference>
<dbReference type="Gene3D" id="3.30.390.30">
    <property type="match status" value="1"/>
</dbReference>
<dbReference type="Gene3D" id="3.50.50.60">
    <property type="entry name" value="FAD/NAD(P)-binding domain"/>
    <property type="match status" value="2"/>
</dbReference>
<dbReference type="InterPro" id="IPR054847">
    <property type="entry name" value="chlor_oxi_RclA"/>
</dbReference>
<dbReference type="InterPro" id="IPR036188">
    <property type="entry name" value="FAD/NAD-bd_sf"/>
</dbReference>
<dbReference type="InterPro" id="IPR023753">
    <property type="entry name" value="FAD/NAD-binding_dom"/>
</dbReference>
<dbReference type="InterPro" id="IPR016156">
    <property type="entry name" value="FAD/NAD-linked_Rdtase_dimer_sf"/>
</dbReference>
<dbReference type="InterPro" id="IPR001100">
    <property type="entry name" value="Pyr_nuc-diS_OxRdtase"/>
</dbReference>
<dbReference type="InterPro" id="IPR004099">
    <property type="entry name" value="Pyr_nucl-diS_OxRdtase_dimer"/>
</dbReference>
<dbReference type="InterPro" id="IPR012999">
    <property type="entry name" value="Pyr_OxRdtase_I_AS"/>
</dbReference>
<dbReference type="NCBIfam" id="NF040477">
    <property type="entry name" value="chlor_oxi_RclA"/>
    <property type="match status" value="1"/>
</dbReference>
<dbReference type="NCBIfam" id="NF005572">
    <property type="entry name" value="PRK07251.1"/>
    <property type="match status" value="1"/>
</dbReference>
<dbReference type="PANTHER" id="PTHR43014">
    <property type="entry name" value="MERCURIC REDUCTASE"/>
    <property type="match status" value="1"/>
</dbReference>
<dbReference type="PANTHER" id="PTHR43014:SF4">
    <property type="entry name" value="PYRIDINE NUCLEOTIDE-DISULFIDE OXIDOREDUCTASE RCLA-RELATED"/>
    <property type="match status" value="1"/>
</dbReference>
<dbReference type="Pfam" id="PF07992">
    <property type="entry name" value="Pyr_redox_2"/>
    <property type="match status" value="1"/>
</dbReference>
<dbReference type="Pfam" id="PF02852">
    <property type="entry name" value="Pyr_redox_dim"/>
    <property type="match status" value="1"/>
</dbReference>
<dbReference type="PIRSF" id="PIRSF000350">
    <property type="entry name" value="Mercury_reductase_MerA"/>
    <property type="match status" value="1"/>
</dbReference>
<dbReference type="PRINTS" id="PR00368">
    <property type="entry name" value="FADPNR"/>
</dbReference>
<dbReference type="PRINTS" id="PR00411">
    <property type="entry name" value="PNDRDTASEI"/>
</dbReference>
<dbReference type="SUPFAM" id="SSF51905">
    <property type="entry name" value="FAD/NAD(P)-binding domain"/>
    <property type="match status" value="1"/>
</dbReference>
<dbReference type="SUPFAM" id="SSF55424">
    <property type="entry name" value="FAD/NAD-linked reductases, dimerisation (C-terminal) domain"/>
    <property type="match status" value="1"/>
</dbReference>
<dbReference type="PROSITE" id="PS00076">
    <property type="entry name" value="PYRIDINE_REDOX_1"/>
    <property type="match status" value="1"/>
</dbReference>
<proteinExistence type="evidence at protein level"/>
<keyword id="KW-0002">3D-structure</keyword>
<keyword id="KW-1015">Disulfide bond</keyword>
<keyword id="KW-0274">FAD</keyword>
<keyword id="KW-0285">Flavoprotein</keyword>
<keyword id="KW-0521">NADP</keyword>
<keyword id="KW-0560">Oxidoreductase</keyword>
<keyword id="KW-0676">Redox-active center</keyword>
<keyword id="KW-1185">Reference proteome</keyword>
<keyword id="KW-0346">Stress response</keyword>
<feature type="chain" id="PRO_0000068059" description="Probable pyridine nucleotide-disulfide oxidoreductase RclA">
    <location>
        <begin position="1"/>
        <end position="441"/>
    </location>
</feature>
<feature type="active site" description="Proton acceptor" evidence="1">
    <location>
        <position position="426"/>
    </location>
</feature>
<feature type="binding site" evidence="1">
    <location>
        <begin position="33"/>
        <end position="43"/>
    </location>
    <ligand>
        <name>FAD</name>
        <dbReference type="ChEBI" id="CHEBI:57692"/>
    </ligand>
</feature>
<feature type="disulfide bond" description="Redox-active" evidence="1">
    <location>
        <begin position="43"/>
        <end position="48"/>
    </location>
</feature>
<feature type="strand" evidence="5">
    <location>
        <begin position="6"/>
        <end position="10"/>
    </location>
</feature>
<feature type="helix" evidence="5">
    <location>
        <begin position="13"/>
        <end position="24"/>
    </location>
</feature>
<feature type="strand" evidence="5">
    <location>
        <begin position="29"/>
        <end position="34"/>
    </location>
</feature>
<feature type="helix" evidence="5">
    <location>
        <begin position="36"/>
        <end position="38"/>
    </location>
</feature>
<feature type="helix" evidence="5">
    <location>
        <begin position="42"/>
        <end position="46"/>
    </location>
</feature>
<feature type="helix" evidence="5">
    <location>
        <begin position="48"/>
        <end position="58"/>
    </location>
</feature>
<feature type="turn" evidence="5">
    <location>
        <begin position="59"/>
        <end position="61"/>
    </location>
</feature>
<feature type="helix" evidence="5">
    <location>
        <begin position="64"/>
        <end position="87"/>
    </location>
</feature>
<feature type="strand" evidence="5">
    <location>
        <begin position="92"/>
        <end position="97"/>
    </location>
</feature>
<feature type="strand" evidence="5">
    <location>
        <begin position="99"/>
        <end position="101"/>
    </location>
</feature>
<feature type="strand" evidence="5">
    <location>
        <begin position="103"/>
        <end position="109"/>
    </location>
</feature>
<feature type="strand" evidence="5">
    <location>
        <begin position="117"/>
        <end position="119"/>
    </location>
</feature>
<feature type="strand" evidence="5">
    <location>
        <begin position="121"/>
        <end position="125"/>
    </location>
</feature>
<feature type="strand" evidence="5">
    <location>
        <begin position="129"/>
        <end position="131"/>
    </location>
</feature>
<feature type="turn" evidence="5">
    <location>
        <begin position="137"/>
        <end position="141"/>
    </location>
</feature>
<feature type="helix" evidence="5">
    <location>
        <begin position="148"/>
        <end position="151"/>
    </location>
</feature>
<feature type="strand" evidence="5">
    <location>
        <begin position="159"/>
        <end position="164"/>
    </location>
</feature>
<feature type="helix" evidence="5">
    <location>
        <begin position="168"/>
        <end position="180"/>
    </location>
</feature>
<feature type="strand" evidence="5">
    <location>
        <begin position="183"/>
        <end position="187"/>
    </location>
</feature>
<feature type="strand" evidence="5">
    <location>
        <begin position="190"/>
        <end position="194"/>
    </location>
</feature>
<feature type="helix" evidence="5">
    <location>
        <begin position="199"/>
        <end position="211"/>
    </location>
</feature>
<feature type="strand" evidence="5">
    <location>
        <begin position="215"/>
        <end position="217"/>
    </location>
</feature>
<feature type="strand" evidence="5">
    <location>
        <begin position="224"/>
        <end position="228"/>
    </location>
</feature>
<feature type="strand" evidence="5">
    <location>
        <begin position="231"/>
        <end position="235"/>
    </location>
</feature>
<feature type="strand" evidence="5">
    <location>
        <begin position="241"/>
        <end position="248"/>
    </location>
</feature>
<feature type="strand" evidence="5">
    <location>
        <begin position="252"/>
        <end position="254"/>
    </location>
</feature>
<feature type="turn" evidence="5">
    <location>
        <begin position="261"/>
        <end position="265"/>
    </location>
</feature>
<feature type="strand" evidence="5">
    <location>
        <begin position="287"/>
        <end position="289"/>
    </location>
</feature>
<feature type="helix" evidence="5">
    <location>
        <begin position="292"/>
        <end position="294"/>
    </location>
</feature>
<feature type="helix" evidence="5">
    <location>
        <begin position="300"/>
        <end position="315"/>
    </location>
</feature>
<feature type="strand" evidence="4">
    <location>
        <begin position="316"/>
        <end position="318"/>
    </location>
</feature>
<feature type="helix" evidence="5">
    <location>
        <begin position="322"/>
        <end position="324"/>
    </location>
</feature>
<feature type="strand" evidence="5">
    <location>
        <begin position="330"/>
        <end position="332"/>
    </location>
</feature>
<feature type="strand" evidence="5">
    <location>
        <begin position="334"/>
        <end position="336"/>
    </location>
</feature>
<feature type="strand" evidence="5">
    <location>
        <begin position="338"/>
        <end position="342"/>
    </location>
</feature>
<feature type="helix" evidence="5">
    <location>
        <begin position="345"/>
        <end position="350"/>
    </location>
</feature>
<feature type="strand" evidence="5">
    <location>
        <begin position="351"/>
        <end position="353"/>
    </location>
</feature>
<feature type="strand" evidence="5">
    <location>
        <begin position="355"/>
        <end position="361"/>
    </location>
</feature>
<feature type="helix" evidence="5">
    <location>
        <begin position="362"/>
        <end position="364"/>
    </location>
</feature>
<feature type="helix" evidence="5">
    <location>
        <begin position="366"/>
        <end position="370"/>
    </location>
</feature>
<feature type="strand" evidence="5">
    <location>
        <begin position="376"/>
        <end position="383"/>
    </location>
</feature>
<feature type="turn" evidence="5">
    <location>
        <begin position="384"/>
        <end position="386"/>
    </location>
</feature>
<feature type="strand" evidence="5">
    <location>
        <begin position="389"/>
        <end position="396"/>
    </location>
</feature>
<feature type="helix" evidence="5">
    <location>
        <begin position="399"/>
        <end position="411"/>
    </location>
</feature>
<feature type="helix" evidence="5">
    <location>
        <begin position="417"/>
        <end position="420"/>
    </location>
</feature>
<feature type="helix" evidence="5">
    <location>
        <begin position="432"/>
        <end position="436"/>
    </location>
</feature>
<feature type="helix" evidence="4">
    <location>
        <begin position="437"/>
        <end position="439"/>
    </location>
</feature>
<reference key="1">
    <citation type="submission" date="1997-01" db="EMBL/GenBank/DDBJ databases">
        <title>Sequence of minutes 4-25 of Escherichia coli.</title>
        <authorList>
            <person name="Chung E."/>
            <person name="Allen E."/>
            <person name="Araujo R."/>
            <person name="Aparicio A.M."/>
            <person name="Davis K."/>
            <person name="Duncan M."/>
            <person name="Federspiel N."/>
            <person name="Hyman R."/>
            <person name="Kalman S."/>
            <person name="Komp C."/>
            <person name="Kurdi O."/>
            <person name="Lew H."/>
            <person name="Lin D."/>
            <person name="Namath A."/>
            <person name="Oefner P."/>
            <person name="Roberts D."/>
            <person name="Schramm S."/>
            <person name="Davis R.W."/>
        </authorList>
    </citation>
    <scope>NUCLEOTIDE SEQUENCE [LARGE SCALE GENOMIC DNA]</scope>
    <source>
        <strain>K12 / MG1655 / ATCC 47076</strain>
    </source>
</reference>
<reference key="2">
    <citation type="journal article" date="1997" name="Science">
        <title>The complete genome sequence of Escherichia coli K-12.</title>
        <authorList>
            <person name="Blattner F.R."/>
            <person name="Plunkett G. III"/>
            <person name="Bloch C.A."/>
            <person name="Perna N.T."/>
            <person name="Burland V."/>
            <person name="Riley M."/>
            <person name="Collado-Vides J."/>
            <person name="Glasner J.D."/>
            <person name="Rode C.K."/>
            <person name="Mayhew G.F."/>
            <person name="Gregor J."/>
            <person name="Davis N.W."/>
            <person name="Kirkpatrick H.A."/>
            <person name="Goeden M.A."/>
            <person name="Rose D.J."/>
            <person name="Mau B."/>
            <person name="Shao Y."/>
        </authorList>
    </citation>
    <scope>NUCLEOTIDE SEQUENCE [LARGE SCALE GENOMIC DNA]</scope>
    <source>
        <strain>K12 / MG1655 / ATCC 47076</strain>
    </source>
</reference>
<reference key="3">
    <citation type="journal article" date="2006" name="Mol. Syst. Biol.">
        <title>Highly accurate genome sequences of Escherichia coli K-12 strains MG1655 and W3110.</title>
        <authorList>
            <person name="Hayashi K."/>
            <person name="Morooka N."/>
            <person name="Yamamoto Y."/>
            <person name="Fujita K."/>
            <person name="Isono K."/>
            <person name="Choi S."/>
            <person name="Ohtsubo E."/>
            <person name="Baba T."/>
            <person name="Wanner B.L."/>
            <person name="Mori H."/>
            <person name="Horiuchi T."/>
        </authorList>
    </citation>
    <scope>NUCLEOTIDE SEQUENCE [LARGE SCALE GENOMIC DNA]</scope>
    <source>
        <strain>K12 / W3110 / ATCC 27325 / DSM 5911</strain>
    </source>
</reference>
<reference key="4">
    <citation type="journal article" date="2013" name="J. Biol. Chem.">
        <title>The RclR protein is a reactive chlorine-specific transcription factor in Escherichia coli.</title>
        <authorList>
            <person name="Parker B.W."/>
            <person name="Schwessinger E.A."/>
            <person name="Jakob U."/>
            <person name="Gray M.J."/>
        </authorList>
    </citation>
    <scope>FUNCTION</scope>
    <scope>INDUCTION</scope>
    <scope>DISRUPTION PHENOTYPE</scope>
    <scope>GENE NAME</scope>
    <source>
        <strain>K12 / MG1655 / ATCC 47076</strain>
    </source>
</reference>
<accession>P77212</accession>
<accession>Q2MCB8</accession>
<protein>
    <recommendedName>
        <fullName>Probable pyridine nucleotide-disulfide oxidoreductase RclA</fullName>
    </recommendedName>
    <alternativeName>
        <fullName>Reactive chlorine resistance protein A</fullName>
    </alternativeName>
</protein>